<name>RS12_DICDI</name>
<comment type="similarity">
    <text evidence="1">Belongs to the eukaryotic ribosomal protein eS12 family.</text>
</comment>
<organism>
    <name type="scientific">Dictyostelium discoideum</name>
    <name type="common">Social amoeba</name>
    <dbReference type="NCBI Taxonomy" id="44689"/>
    <lineage>
        <taxon>Eukaryota</taxon>
        <taxon>Amoebozoa</taxon>
        <taxon>Evosea</taxon>
        <taxon>Eumycetozoa</taxon>
        <taxon>Dictyostelia</taxon>
        <taxon>Dictyosteliales</taxon>
        <taxon>Dictyosteliaceae</taxon>
        <taxon>Dictyostelium</taxon>
    </lineage>
</organism>
<reference key="1">
    <citation type="journal article" date="2005" name="Nature">
        <title>The genome of the social amoeba Dictyostelium discoideum.</title>
        <authorList>
            <person name="Eichinger L."/>
            <person name="Pachebat J.A."/>
            <person name="Gloeckner G."/>
            <person name="Rajandream M.A."/>
            <person name="Sucgang R."/>
            <person name="Berriman M."/>
            <person name="Song J."/>
            <person name="Olsen R."/>
            <person name="Szafranski K."/>
            <person name="Xu Q."/>
            <person name="Tunggal B."/>
            <person name="Kummerfeld S."/>
            <person name="Madera M."/>
            <person name="Konfortov B.A."/>
            <person name="Rivero F."/>
            <person name="Bankier A.T."/>
            <person name="Lehmann R."/>
            <person name="Hamlin N."/>
            <person name="Davies R."/>
            <person name="Gaudet P."/>
            <person name="Fey P."/>
            <person name="Pilcher K."/>
            <person name="Chen G."/>
            <person name="Saunders D."/>
            <person name="Sodergren E.J."/>
            <person name="Davis P."/>
            <person name="Kerhornou A."/>
            <person name="Nie X."/>
            <person name="Hall N."/>
            <person name="Anjard C."/>
            <person name="Hemphill L."/>
            <person name="Bason N."/>
            <person name="Farbrother P."/>
            <person name="Desany B."/>
            <person name="Just E."/>
            <person name="Morio T."/>
            <person name="Rost R."/>
            <person name="Churcher C.M."/>
            <person name="Cooper J."/>
            <person name="Haydock S."/>
            <person name="van Driessche N."/>
            <person name="Cronin A."/>
            <person name="Goodhead I."/>
            <person name="Muzny D.M."/>
            <person name="Mourier T."/>
            <person name="Pain A."/>
            <person name="Lu M."/>
            <person name="Harper D."/>
            <person name="Lindsay R."/>
            <person name="Hauser H."/>
            <person name="James K.D."/>
            <person name="Quiles M."/>
            <person name="Madan Babu M."/>
            <person name="Saito T."/>
            <person name="Buchrieser C."/>
            <person name="Wardroper A."/>
            <person name="Felder M."/>
            <person name="Thangavelu M."/>
            <person name="Johnson D."/>
            <person name="Knights A."/>
            <person name="Loulseged H."/>
            <person name="Mungall K.L."/>
            <person name="Oliver K."/>
            <person name="Price C."/>
            <person name="Quail M.A."/>
            <person name="Urushihara H."/>
            <person name="Hernandez J."/>
            <person name="Rabbinowitsch E."/>
            <person name="Steffen D."/>
            <person name="Sanders M."/>
            <person name="Ma J."/>
            <person name="Kohara Y."/>
            <person name="Sharp S."/>
            <person name="Simmonds M.N."/>
            <person name="Spiegler S."/>
            <person name="Tivey A."/>
            <person name="Sugano S."/>
            <person name="White B."/>
            <person name="Walker D."/>
            <person name="Woodward J.R."/>
            <person name="Winckler T."/>
            <person name="Tanaka Y."/>
            <person name="Shaulsky G."/>
            <person name="Schleicher M."/>
            <person name="Weinstock G.M."/>
            <person name="Rosenthal A."/>
            <person name="Cox E.C."/>
            <person name="Chisholm R.L."/>
            <person name="Gibbs R.A."/>
            <person name="Loomis W.F."/>
            <person name="Platzer M."/>
            <person name="Kay R.R."/>
            <person name="Williams J.G."/>
            <person name="Dear P.H."/>
            <person name="Noegel A.A."/>
            <person name="Barrell B.G."/>
            <person name="Kuspa A."/>
        </authorList>
    </citation>
    <scope>NUCLEOTIDE SEQUENCE [LARGE SCALE GENOMIC DNA]</scope>
    <source>
        <strain>AX4</strain>
    </source>
</reference>
<reference key="2">
    <citation type="journal article" date="2006" name="Mol. Cell. Proteomics">
        <title>Proteomics fingerprinting of phagosome maturation and evidence for the role of a Galpha during uptake.</title>
        <authorList>
            <person name="Gotthardt D."/>
            <person name="Blancheteau V."/>
            <person name="Bosserhoff A."/>
            <person name="Ruppert T."/>
            <person name="Delorenzi M."/>
            <person name="Soldati T."/>
        </authorList>
    </citation>
    <scope>IDENTIFICATION BY MASS SPECTROMETRY [LARGE SCALE ANALYSIS]</scope>
    <source>
        <strain>AX2</strain>
    </source>
</reference>
<feature type="chain" id="PRO_0000319987" description="Small ribosomal subunit protein eS12">
    <location>
        <begin position="1"/>
        <end position="136"/>
    </location>
</feature>
<sequence length="136" mass="14906">MEGDAPVIAANPLEKNTDPMVALQKVIKESLAVQGVARGLHETVKALDKRTARLCVLASNCDEPNFVRLVKALATEHNIPLIEVPDNKALGEWAGLCKLDKDLAARKVVACSTLVIKTFGKESDDYKFLMEYISKQ</sequence>
<evidence type="ECO:0000305" key="1"/>
<dbReference type="EMBL" id="AAFI02000064">
    <property type="protein sequence ID" value="EAL65307.1"/>
    <property type="molecule type" value="Genomic_DNA"/>
</dbReference>
<dbReference type="RefSeq" id="XP_638666.1">
    <property type="nucleotide sequence ID" value="XM_633574.1"/>
</dbReference>
<dbReference type="SMR" id="Q54PX9"/>
<dbReference type="FunCoup" id="Q54PX9">
    <property type="interactions" value="682"/>
</dbReference>
<dbReference type="STRING" id="44689.Q54PX9"/>
<dbReference type="PaxDb" id="44689-DDB0230044"/>
<dbReference type="EnsemblProtists" id="EAL65307">
    <property type="protein sequence ID" value="EAL65307"/>
    <property type="gene ID" value="DDB_G0284237"/>
</dbReference>
<dbReference type="GeneID" id="8624495"/>
<dbReference type="KEGG" id="ddi:DDB_G0284237"/>
<dbReference type="dictyBase" id="DDB_G0284237">
    <property type="gene designation" value="rps12"/>
</dbReference>
<dbReference type="VEuPathDB" id="AmoebaDB:DDB_G0284237"/>
<dbReference type="eggNOG" id="KOG3406">
    <property type="taxonomic scope" value="Eukaryota"/>
</dbReference>
<dbReference type="HOGENOM" id="CLU_110343_1_0_1"/>
<dbReference type="InParanoid" id="Q54PX9"/>
<dbReference type="OMA" id="CAEHQIP"/>
<dbReference type="PhylomeDB" id="Q54PX9"/>
<dbReference type="Reactome" id="R-DDI-156827">
    <property type="pathway name" value="L13a-mediated translational silencing of Ceruloplasmin expression"/>
</dbReference>
<dbReference type="Reactome" id="R-DDI-1799339">
    <property type="pathway name" value="SRP-dependent cotranslational protein targeting to membrane"/>
</dbReference>
<dbReference type="Reactome" id="R-DDI-72689">
    <property type="pathway name" value="Formation of a pool of free 40S subunits"/>
</dbReference>
<dbReference type="Reactome" id="R-DDI-72695">
    <property type="pathway name" value="Formation of the ternary complex, and subsequently, the 43S complex"/>
</dbReference>
<dbReference type="Reactome" id="R-DDI-72702">
    <property type="pathway name" value="Ribosomal scanning and start codon recognition"/>
</dbReference>
<dbReference type="Reactome" id="R-DDI-72706">
    <property type="pathway name" value="GTP hydrolysis and joining of the 60S ribosomal subunit"/>
</dbReference>
<dbReference type="Reactome" id="R-DDI-975956">
    <property type="pathway name" value="Nonsense Mediated Decay (NMD) independent of the Exon Junction Complex (EJC)"/>
</dbReference>
<dbReference type="Reactome" id="R-DDI-975957">
    <property type="pathway name" value="Nonsense Mediated Decay (NMD) enhanced by the Exon Junction Complex (EJC)"/>
</dbReference>
<dbReference type="PRO" id="PR:Q54PX9"/>
<dbReference type="Proteomes" id="UP000002195">
    <property type="component" value="Chromosome 4"/>
</dbReference>
<dbReference type="GO" id="GO:0022627">
    <property type="term" value="C:cytosolic small ribosomal subunit"/>
    <property type="evidence" value="ECO:0000318"/>
    <property type="project" value="GO_Central"/>
</dbReference>
<dbReference type="GO" id="GO:0031012">
    <property type="term" value="C:extracellular matrix"/>
    <property type="evidence" value="ECO:0007005"/>
    <property type="project" value="dictyBase"/>
</dbReference>
<dbReference type="GO" id="GO:0045335">
    <property type="term" value="C:phagocytic vesicle"/>
    <property type="evidence" value="ECO:0007005"/>
    <property type="project" value="dictyBase"/>
</dbReference>
<dbReference type="GO" id="GO:0003735">
    <property type="term" value="F:structural constituent of ribosome"/>
    <property type="evidence" value="ECO:0000318"/>
    <property type="project" value="GO_Central"/>
</dbReference>
<dbReference type="GO" id="GO:1990145">
    <property type="term" value="P:maintenance of translational fidelity"/>
    <property type="evidence" value="ECO:0000318"/>
    <property type="project" value="GO_Central"/>
</dbReference>
<dbReference type="GO" id="GO:0009617">
    <property type="term" value="P:response to bacterium"/>
    <property type="evidence" value="ECO:0007007"/>
    <property type="project" value="dictyBase"/>
</dbReference>
<dbReference type="GO" id="GO:0042274">
    <property type="term" value="P:ribosomal small subunit biogenesis"/>
    <property type="evidence" value="ECO:0000318"/>
    <property type="project" value="GO_Central"/>
</dbReference>
<dbReference type="FunFam" id="3.30.1330.30:FF:000039">
    <property type="entry name" value="40S ribosomal protein S12"/>
    <property type="match status" value="1"/>
</dbReference>
<dbReference type="Gene3D" id="3.30.1330.30">
    <property type="match status" value="1"/>
</dbReference>
<dbReference type="InterPro" id="IPR029064">
    <property type="entry name" value="Ribosomal_eL30-like_sf"/>
</dbReference>
<dbReference type="InterPro" id="IPR004038">
    <property type="entry name" value="Ribosomal_eL8/eL30/eS12/Gad45"/>
</dbReference>
<dbReference type="InterPro" id="IPR000530">
    <property type="entry name" value="Ribosomal_eS12"/>
</dbReference>
<dbReference type="PANTHER" id="PTHR11843">
    <property type="entry name" value="40S RIBOSOMAL PROTEIN S12"/>
    <property type="match status" value="1"/>
</dbReference>
<dbReference type="Pfam" id="PF01248">
    <property type="entry name" value="Ribosomal_L7Ae"/>
    <property type="match status" value="1"/>
</dbReference>
<dbReference type="PRINTS" id="PR00972">
    <property type="entry name" value="RIBSOMALS12E"/>
</dbReference>
<dbReference type="SUPFAM" id="SSF55315">
    <property type="entry name" value="L30e-like"/>
    <property type="match status" value="1"/>
</dbReference>
<gene>
    <name type="primary">rps12</name>
    <name type="ORF">DDB_G0284237</name>
</gene>
<accession>Q54PX9</accession>
<proteinExistence type="evidence at protein level"/>
<keyword id="KW-1185">Reference proteome</keyword>
<keyword id="KW-0687">Ribonucleoprotein</keyword>
<keyword id="KW-0689">Ribosomal protein</keyword>
<protein>
    <recommendedName>
        <fullName evidence="1">Small ribosomal subunit protein eS12</fullName>
    </recommendedName>
    <alternativeName>
        <fullName>40S ribosomal protein S12</fullName>
    </alternativeName>
</protein>